<feature type="chain" id="PRO_1000133387" description="GMP synthase [glutamine-hydrolyzing]">
    <location>
        <begin position="1"/>
        <end position="520"/>
    </location>
</feature>
<feature type="domain" description="Glutamine amidotransferase type-1" evidence="1">
    <location>
        <begin position="13"/>
        <end position="205"/>
    </location>
</feature>
<feature type="domain" description="GMPS ATP-PPase" evidence="1">
    <location>
        <begin position="206"/>
        <end position="395"/>
    </location>
</feature>
<feature type="active site" description="Nucleophile" evidence="1">
    <location>
        <position position="90"/>
    </location>
</feature>
<feature type="active site" evidence="1">
    <location>
        <position position="179"/>
    </location>
</feature>
<feature type="active site" evidence="1">
    <location>
        <position position="181"/>
    </location>
</feature>
<feature type="binding site" evidence="1">
    <location>
        <begin position="233"/>
        <end position="239"/>
    </location>
    <ligand>
        <name>ATP</name>
        <dbReference type="ChEBI" id="CHEBI:30616"/>
    </ligand>
</feature>
<keyword id="KW-0067">ATP-binding</keyword>
<keyword id="KW-0315">Glutamine amidotransferase</keyword>
<keyword id="KW-0332">GMP biosynthesis</keyword>
<keyword id="KW-0436">Ligase</keyword>
<keyword id="KW-0547">Nucleotide-binding</keyword>
<keyword id="KW-0658">Purine biosynthesis</keyword>
<reference key="1">
    <citation type="journal article" date="2010" name="Genome Biol.">
        <title>Structure and dynamics of the pan-genome of Streptococcus pneumoniae and closely related species.</title>
        <authorList>
            <person name="Donati C."/>
            <person name="Hiller N.L."/>
            <person name="Tettelin H."/>
            <person name="Muzzi A."/>
            <person name="Croucher N.J."/>
            <person name="Angiuoli S.V."/>
            <person name="Oggioni M."/>
            <person name="Dunning Hotopp J.C."/>
            <person name="Hu F.Z."/>
            <person name="Riley D.R."/>
            <person name="Covacci A."/>
            <person name="Mitchell T.J."/>
            <person name="Bentley S.D."/>
            <person name="Kilian M."/>
            <person name="Ehrlich G.D."/>
            <person name="Rappuoli R."/>
            <person name="Moxon E.R."/>
            <person name="Masignani V."/>
        </authorList>
    </citation>
    <scope>NUCLEOTIDE SEQUENCE [LARGE SCALE GENOMIC DNA]</scope>
    <source>
        <strain>P1031</strain>
    </source>
</reference>
<proteinExistence type="inferred from homology"/>
<dbReference type="EC" id="6.3.5.2" evidence="1"/>
<dbReference type="EMBL" id="CP000920">
    <property type="protein sequence ID" value="ACO21322.1"/>
    <property type="molecule type" value="Genomic_DNA"/>
</dbReference>
<dbReference type="RefSeq" id="WP_000065693.1">
    <property type="nucleotide sequence ID" value="NC_012467.1"/>
</dbReference>
<dbReference type="SMR" id="C1CLE8"/>
<dbReference type="MEROPS" id="C26.957"/>
<dbReference type="KEGG" id="spp:SPP_1466"/>
<dbReference type="HOGENOM" id="CLU_014340_0_5_9"/>
<dbReference type="UniPathway" id="UPA00189">
    <property type="reaction ID" value="UER00296"/>
</dbReference>
<dbReference type="GO" id="GO:0005829">
    <property type="term" value="C:cytosol"/>
    <property type="evidence" value="ECO:0007669"/>
    <property type="project" value="TreeGrafter"/>
</dbReference>
<dbReference type="GO" id="GO:0005524">
    <property type="term" value="F:ATP binding"/>
    <property type="evidence" value="ECO:0007669"/>
    <property type="project" value="UniProtKB-UniRule"/>
</dbReference>
<dbReference type="GO" id="GO:0003921">
    <property type="term" value="F:GMP synthase activity"/>
    <property type="evidence" value="ECO:0007669"/>
    <property type="project" value="InterPro"/>
</dbReference>
<dbReference type="CDD" id="cd01742">
    <property type="entry name" value="GATase1_GMP_Synthase"/>
    <property type="match status" value="1"/>
</dbReference>
<dbReference type="CDD" id="cd01997">
    <property type="entry name" value="GMP_synthase_C"/>
    <property type="match status" value="1"/>
</dbReference>
<dbReference type="FunFam" id="3.30.300.10:FF:000002">
    <property type="entry name" value="GMP synthase [glutamine-hydrolyzing]"/>
    <property type="match status" value="1"/>
</dbReference>
<dbReference type="FunFam" id="3.40.50.620:FF:000001">
    <property type="entry name" value="GMP synthase [glutamine-hydrolyzing]"/>
    <property type="match status" value="1"/>
</dbReference>
<dbReference type="FunFam" id="3.40.50.880:FF:000001">
    <property type="entry name" value="GMP synthase [glutamine-hydrolyzing]"/>
    <property type="match status" value="1"/>
</dbReference>
<dbReference type="Gene3D" id="3.30.300.10">
    <property type="match status" value="1"/>
</dbReference>
<dbReference type="Gene3D" id="3.40.50.880">
    <property type="match status" value="1"/>
</dbReference>
<dbReference type="Gene3D" id="3.40.50.620">
    <property type="entry name" value="HUPs"/>
    <property type="match status" value="1"/>
</dbReference>
<dbReference type="HAMAP" id="MF_00344">
    <property type="entry name" value="GMP_synthase"/>
    <property type="match status" value="1"/>
</dbReference>
<dbReference type="InterPro" id="IPR029062">
    <property type="entry name" value="Class_I_gatase-like"/>
</dbReference>
<dbReference type="InterPro" id="IPR017926">
    <property type="entry name" value="GATASE"/>
</dbReference>
<dbReference type="InterPro" id="IPR001674">
    <property type="entry name" value="GMP_synth_C"/>
</dbReference>
<dbReference type="InterPro" id="IPR004739">
    <property type="entry name" value="GMP_synth_GATase"/>
</dbReference>
<dbReference type="InterPro" id="IPR022955">
    <property type="entry name" value="GMP_synthase"/>
</dbReference>
<dbReference type="InterPro" id="IPR025777">
    <property type="entry name" value="GMPS_ATP_PPase_dom"/>
</dbReference>
<dbReference type="InterPro" id="IPR022310">
    <property type="entry name" value="NAD/GMP_synthase"/>
</dbReference>
<dbReference type="InterPro" id="IPR014729">
    <property type="entry name" value="Rossmann-like_a/b/a_fold"/>
</dbReference>
<dbReference type="NCBIfam" id="TIGR00884">
    <property type="entry name" value="guaA_Cterm"/>
    <property type="match status" value="1"/>
</dbReference>
<dbReference type="NCBIfam" id="TIGR00888">
    <property type="entry name" value="guaA_Nterm"/>
    <property type="match status" value="1"/>
</dbReference>
<dbReference type="NCBIfam" id="NF000848">
    <property type="entry name" value="PRK00074.1"/>
    <property type="match status" value="1"/>
</dbReference>
<dbReference type="PANTHER" id="PTHR11922:SF2">
    <property type="entry name" value="GMP SYNTHASE [GLUTAMINE-HYDROLYZING]"/>
    <property type="match status" value="1"/>
</dbReference>
<dbReference type="PANTHER" id="PTHR11922">
    <property type="entry name" value="GMP SYNTHASE-RELATED"/>
    <property type="match status" value="1"/>
</dbReference>
<dbReference type="Pfam" id="PF00117">
    <property type="entry name" value="GATase"/>
    <property type="match status" value="1"/>
</dbReference>
<dbReference type="Pfam" id="PF00958">
    <property type="entry name" value="GMP_synt_C"/>
    <property type="match status" value="1"/>
</dbReference>
<dbReference type="Pfam" id="PF02540">
    <property type="entry name" value="NAD_synthase"/>
    <property type="match status" value="1"/>
</dbReference>
<dbReference type="PRINTS" id="PR00097">
    <property type="entry name" value="ANTSNTHASEII"/>
</dbReference>
<dbReference type="PRINTS" id="PR00099">
    <property type="entry name" value="CPSGATASE"/>
</dbReference>
<dbReference type="PRINTS" id="PR00096">
    <property type="entry name" value="GATASE"/>
</dbReference>
<dbReference type="SUPFAM" id="SSF52402">
    <property type="entry name" value="Adenine nucleotide alpha hydrolases-like"/>
    <property type="match status" value="1"/>
</dbReference>
<dbReference type="SUPFAM" id="SSF52317">
    <property type="entry name" value="Class I glutamine amidotransferase-like"/>
    <property type="match status" value="1"/>
</dbReference>
<dbReference type="PROSITE" id="PS51273">
    <property type="entry name" value="GATASE_TYPE_1"/>
    <property type="match status" value="1"/>
</dbReference>
<dbReference type="PROSITE" id="PS51553">
    <property type="entry name" value="GMPS_ATP_PPASE"/>
    <property type="match status" value="1"/>
</dbReference>
<gene>
    <name evidence="1" type="primary">guaA</name>
    <name type="ordered locus">SPP_1466</name>
</gene>
<accession>C1CLE8</accession>
<protein>
    <recommendedName>
        <fullName evidence="1">GMP synthase [glutamine-hydrolyzing]</fullName>
        <ecNumber evidence="1">6.3.5.2</ecNumber>
    </recommendedName>
    <alternativeName>
        <fullName evidence="1">GMP synthetase</fullName>
    </alternativeName>
    <alternativeName>
        <fullName evidence="1">Glutamine amidotransferase</fullName>
    </alternativeName>
</protein>
<evidence type="ECO:0000255" key="1">
    <source>
        <dbReference type="HAMAP-Rule" id="MF_00344"/>
    </source>
</evidence>
<organism>
    <name type="scientific">Streptococcus pneumoniae (strain P1031)</name>
    <dbReference type="NCBI Taxonomy" id="488223"/>
    <lineage>
        <taxon>Bacteria</taxon>
        <taxon>Bacillati</taxon>
        <taxon>Bacillota</taxon>
        <taxon>Bacilli</taxon>
        <taxon>Lactobacillales</taxon>
        <taxon>Streptococcaceae</taxon>
        <taxon>Streptococcus</taxon>
    </lineage>
</organism>
<comment type="function">
    <text evidence="1">Catalyzes the synthesis of GMP from XMP.</text>
</comment>
<comment type="catalytic activity">
    <reaction evidence="1">
        <text>XMP + L-glutamine + ATP + H2O = GMP + L-glutamate + AMP + diphosphate + 2 H(+)</text>
        <dbReference type="Rhea" id="RHEA:11680"/>
        <dbReference type="ChEBI" id="CHEBI:15377"/>
        <dbReference type="ChEBI" id="CHEBI:15378"/>
        <dbReference type="ChEBI" id="CHEBI:29985"/>
        <dbReference type="ChEBI" id="CHEBI:30616"/>
        <dbReference type="ChEBI" id="CHEBI:33019"/>
        <dbReference type="ChEBI" id="CHEBI:57464"/>
        <dbReference type="ChEBI" id="CHEBI:58115"/>
        <dbReference type="ChEBI" id="CHEBI:58359"/>
        <dbReference type="ChEBI" id="CHEBI:456215"/>
        <dbReference type="EC" id="6.3.5.2"/>
    </reaction>
</comment>
<comment type="pathway">
    <text evidence="1">Purine metabolism; GMP biosynthesis; GMP from XMP (L-Gln route): step 1/1.</text>
</comment>
<comment type="subunit">
    <text evidence="1">Homodimer.</text>
</comment>
<sequence>MSNISTDLQDVEKIIVLDYGSQYNQLISRRIRDIGVFSELKSHKISAAEVREVNPVGIILSGGPNSVYEDGSFDIDPEIFELGIPILGICYGMQLLTHKLGGKVVPAGDAGNREYGQSTLTHTPSALFESTPDEQTVLMSHGDAVTEIPADFVRTGTSADCPYAAIENPDKHIYGIQFHPEVRHSVYGNDILRNFALNICKAKGDWSMDNFIDMQIKKIRETVGDKRVLLGLSGGVDSSVVGVLLQKAIGDQLICIFVDHGLLRKGEADQVMDMLGGKFGLNIVKADAAKRFLDKLAGVSDPEQKRKIIGNEFVYVFDDEASKLKDVKFLAQGTLYTDVIESGTDTAQTIKSHHNVGGLPEDMQFELIEPLNTLYKDEVRALGTELGMPDHIVWRQPFPGPGLAIRVMGEITEEKLETVRESDAILREEIAKAGLDRDIWQYFTVNTGVRSVGVMGDGRTYDYTIAIRAITSIDGMTADFAKIPWEVLQKISVRIVNEVDHVNRIVYDITSKPPATVEWE</sequence>
<name>GUAA_STRZP</name>